<keyword id="KW-0963">Cytoplasm</keyword>
<keyword id="KW-0378">Hydrolase</keyword>
<keyword id="KW-0645">Protease</keyword>
<keyword id="KW-0788">Thiol protease</keyword>
<name>PCP_BACAA</name>
<comment type="function">
    <text evidence="1">Removes 5-oxoproline from various penultimate amino acid residues except L-proline.</text>
</comment>
<comment type="catalytic activity">
    <reaction evidence="1">
        <text>Release of an N-terminal pyroglutamyl group from a polypeptide, the second amino acid generally not being Pro.</text>
        <dbReference type="EC" id="3.4.19.3"/>
    </reaction>
</comment>
<comment type="subunit">
    <text evidence="1">Homotetramer.</text>
</comment>
<comment type="subcellular location">
    <subcellularLocation>
        <location evidence="1">Cytoplasm</location>
    </subcellularLocation>
</comment>
<comment type="similarity">
    <text evidence="1">Belongs to the peptidase C15 family.</text>
</comment>
<protein>
    <recommendedName>
        <fullName evidence="1">Pyrrolidone-carboxylate peptidase</fullName>
        <ecNumber evidence="1">3.4.19.3</ecNumber>
    </recommendedName>
    <alternativeName>
        <fullName evidence="1">5-oxoprolyl-peptidase</fullName>
    </alternativeName>
    <alternativeName>
        <fullName evidence="1">Pyroglutamyl-peptidase I</fullName>
        <shortName evidence="1">PGP-I</shortName>
        <shortName evidence="1">Pyrase</shortName>
    </alternativeName>
</protein>
<accession>C3P0R7</accession>
<organism>
    <name type="scientific">Bacillus anthracis (strain A0248)</name>
    <dbReference type="NCBI Taxonomy" id="592021"/>
    <lineage>
        <taxon>Bacteria</taxon>
        <taxon>Bacillati</taxon>
        <taxon>Bacillota</taxon>
        <taxon>Bacilli</taxon>
        <taxon>Bacillales</taxon>
        <taxon>Bacillaceae</taxon>
        <taxon>Bacillus</taxon>
        <taxon>Bacillus cereus group</taxon>
    </lineage>
</organism>
<reference key="1">
    <citation type="submission" date="2009-04" db="EMBL/GenBank/DDBJ databases">
        <title>Genome sequence of Bacillus anthracis A0248.</title>
        <authorList>
            <person name="Dodson R.J."/>
            <person name="Munk A.C."/>
            <person name="Bruce D."/>
            <person name="Detter C."/>
            <person name="Tapia R."/>
            <person name="Sutton G."/>
            <person name="Sims D."/>
            <person name="Brettin T."/>
        </authorList>
    </citation>
    <scope>NUCLEOTIDE SEQUENCE [LARGE SCALE GENOMIC DNA]</scope>
    <source>
        <strain>A0248</strain>
    </source>
</reference>
<feature type="chain" id="PRO_1000192217" description="Pyrrolidone-carboxylate peptidase">
    <location>
        <begin position="1"/>
        <end position="215"/>
    </location>
</feature>
<feature type="active site" evidence="1">
    <location>
        <position position="80"/>
    </location>
</feature>
<feature type="active site" evidence="1">
    <location>
        <position position="143"/>
    </location>
</feature>
<feature type="active site" evidence="1">
    <location>
        <position position="167"/>
    </location>
</feature>
<evidence type="ECO:0000255" key="1">
    <source>
        <dbReference type="HAMAP-Rule" id="MF_00417"/>
    </source>
</evidence>
<proteinExistence type="inferred from homology"/>
<dbReference type="EC" id="3.4.19.3" evidence="1"/>
<dbReference type="EMBL" id="CP001598">
    <property type="protein sequence ID" value="ACQ46189.1"/>
    <property type="molecule type" value="Genomic_DNA"/>
</dbReference>
<dbReference type="RefSeq" id="WP_000859733.1">
    <property type="nucleotide sequence ID" value="NC_012659.1"/>
</dbReference>
<dbReference type="SMR" id="C3P0R7"/>
<dbReference type="MEROPS" id="C15.001"/>
<dbReference type="GeneID" id="45022894"/>
<dbReference type="KEGG" id="bai:BAA_3141"/>
<dbReference type="HOGENOM" id="CLU_043960_4_0_9"/>
<dbReference type="GO" id="GO:0005829">
    <property type="term" value="C:cytosol"/>
    <property type="evidence" value="ECO:0007669"/>
    <property type="project" value="InterPro"/>
</dbReference>
<dbReference type="GO" id="GO:0016920">
    <property type="term" value="F:pyroglutamyl-peptidase activity"/>
    <property type="evidence" value="ECO:0007669"/>
    <property type="project" value="UniProtKB-UniRule"/>
</dbReference>
<dbReference type="GO" id="GO:0006508">
    <property type="term" value="P:proteolysis"/>
    <property type="evidence" value="ECO:0007669"/>
    <property type="project" value="UniProtKB-KW"/>
</dbReference>
<dbReference type="CDD" id="cd00501">
    <property type="entry name" value="Peptidase_C15"/>
    <property type="match status" value="1"/>
</dbReference>
<dbReference type="FunFam" id="3.40.630.20:FF:000001">
    <property type="entry name" value="Pyrrolidone-carboxylate peptidase"/>
    <property type="match status" value="1"/>
</dbReference>
<dbReference type="Gene3D" id="3.40.630.20">
    <property type="entry name" value="Peptidase C15, pyroglutamyl peptidase I-like"/>
    <property type="match status" value="1"/>
</dbReference>
<dbReference type="HAMAP" id="MF_00417">
    <property type="entry name" value="Pyrrolid_peptidase"/>
    <property type="match status" value="1"/>
</dbReference>
<dbReference type="InterPro" id="IPR000816">
    <property type="entry name" value="Peptidase_C15"/>
</dbReference>
<dbReference type="InterPro" id="IPR016125">
    <property type="entry name" value="Peptidase_C15-like"/>
</dbReference>
<dbReference type="InterPro" id="IPR036440">
    <property type="entry name" value="Peptidase_C15-like_sf"/>
</dbReference>
<dbReference type="InterPro" id="IPR029762">
    <property type="entry name" value="PGP-I_bact-type"/>
</dbReference>
<dbReference type="InterPro" id="IPR033694">
    <property type="entry name" value="PGPEP1_Cys_AS"/>
</dbReference>
<dbReference type="InterPro" id="IPR033693">
    <property type="entry name" value="PGPEP1_Glu_AS"/>
</dbReference>
<dbReference type="NCBIfam" id="NF009676">
    <property type="entry name" value="PRK13197.1"/>
    <property type="match status" value="1"/>
</dbReference>
<dbReference type="NCBIfam" id="TIGR00504">
    <property type="entry name" value="pyro_pdase"/>
    <property type="match status" value="1"/>
</dbReference>
<dbReference type="PANTHER" id="PTHR23402">
    <property type="entry name" value="PROTEASE FAMILY C15 PYROGLUTAMYL-PEPTIDASE I-RELATED"/>
    <property type="match status" value="1"/>
</dbReference>
<dbReference type="PANTHER" id="PTHR23402:SF1">
    <property type="entry name" value="PYROGLUTAMYL-PEPTIDASE I"/>
    <property type="match status" value="1"/>
</dbReference>
<dbReference type="Pfam" id="PF01470">
    <property type="entry name" value="Peptidase_C15"/>
    <property type="match status" value="1"/>
</dbReference>
<dbReference type="PIRSF" id="PIRSF015592">
    <property type="entry name" value="Prld-crbxl_pptds"/>
    <property type="match status" value="1"/>
</dbReference>
<dbReference type="PRINTS" id="PR00706">
    <property type="entry name" value="PYROGLUPTASE"/>
</dbReference>
<dbReference type="SUPFAM" id="SSF53182">
    <property type="entry name" value="Pyrrolidone carboxyl peptidase (pyroglutamate aminopeptidase)"/>
    <property type="match status" value="1"/>
</dbReference>
<dbReference type="PROSITE" id="PS01334">
    <property type="entry name" value="PYRASE_CYS"/>
    <property type="match status" value="1"/>
</dbReference>
<dbReference type="PROSITE" id="PS01333">
    <property type="entry name" value="PYRASE_GLU"/>
    <property type="match status" value="1"/>
</dbReference>
<sequence length="215" mass="23513">MKTVLLTGFDPFGGESINPAWEVAKSLHEKTIGEYKIISKQVPTVFHKSISVLKEYIEELAPEFIICIGQAGGRPDITIERVAINIDDARIADNEGNQPVDVPVVEEGPAAYWSTLPMKAIVKKLQEEGIPASVSQTAGTFVCNHLFYGLMHELEKHDTKMKGGFIHIPFLPEQASNYPGQPSMSLSTIRKGIELAVEVTTTVEVDIVEVGGTTH</sequence>
<gene>
    <name evidence="1" type="primary">pcp</name>
    <name type="ordered locus">BAA_3141</name>
</gene>